<dbReference type="EC" id="3.5.4.16" evidence="2"/>
<dbReference type="EMBL" id="CP000726">
    <property type="protein sequence ID" value="ABS33559.1"/>
    <property type="molecule type" value="Genomic_DNA"/>
</dbReference>
<dbReference type="RefSeq" id="WP_004451708.1">
    <property type="nucleotide sequence ID" value="NC_009697.1"/>
</dbReference>
<dbReference type="SMR" id="A7FU67"/>
<dbReference type="GeneID" id="5185811"/>
<dbReference type="KEGG" id="cba:CLB_1577"/>
<dbReference type="HOGENOM" id="CLU_049768_3_2_9"/>
<dbReference type="UniPathway" id="UPA00848">
    <property type="reaction ID" value="UER00151"/>
</dbReference>
<dbReference type="GO" id="GO:0005737">
    <property type="term" value="C:cytoplasm"/>
    <property type="evidence" value="ECO:0007669"/>
    <property type="project" value="TreeGrafter"/>
</dbReference>
<dbReference type="GO" id="GO:0005525">
    <property type="term" value="F:GTP binding"/>
    <property type="evidence" value="ECO:0007669"/>
    <property type="project" value="UniProtKB-KW"/>
</dbReference>
<dbReference type="GO" id="GO:0003934">
    <property type="term" value="F:GTP cyclohydrolase I activity"/>
    <property type="evidence" value="ECO:0007669"/>
    <property type="project" value="UniProtKB-UniRule"/>
</dbReference>
<dbReference type="GO" id="GO:0008270">
    <property type="term" value="F:zinc ion binding"/>
    <property type="evidence" value="ECO:0007669"/>
    <property type="project" value="UniProtKB-UniRule"/>
</dbReference>
<dbReference type="GO" id="GO:0006730">
    <property type="term" value="P:one-carbon metabolic process"/>
    <property type="evidence" value="ECO:0007669"/>
    <property type="project" value="UniProtKB-UniRule"/>
</dbReference>
<dbReference type="GO" id="GO:0006729">
    <property type="term" value="P:tetrahydrobiopterin biosynthetic process"/>
    <property type="evidence" value="ECO:0007669"/>
    <property type="project" value="TreeGrafter"/>
</dbReference>
<dbReference type="GO" id="GO:0046654">
    <property type="term" value="P:tetrahydrofolate biosynthetic process"/>
    <property type="evidence" value="ECO:0007669"/>
    <property type="project" value="UniProtKB-UniRule"/>
</dbReference>
<dbReference type="FunFam" id="1.10.286.10:FF:000007">
    <property type="entry name" value="GTP cyclohydrolase 1"/>
    <property type="match status" value="1"/>
</dbReference>
<dbReference type="FunFam" id="3.30.1130.10:FF:000001">
    <property type="entry name" value="GTP cyclohydrolase 1"/>
    <property type="match status" value="1"/>
</dbReference>
<dbReference type="Gene3D" id="1.10.286.10">
    <property type="match status" value="1"/>
</dbReference>
<dbReference type="Gene3D" id="3.30.1130.10">
    <property type="match status" value="1"/>
</dbReference>
<dbReference type="HAMAP" id="MF_00223">
    <property type="entry name" value="FolE"/>
    <property type="match status" value="1"/>
</dbReference>
<dbReference type="InterPro" id="IPR043133">
    <property type="entry name" value="GTP-CH-I_C/QueF"/>
</dbReference>
<dbReference type="InterPro" id="IPR043134">
    <property type="entry name" value="GTP-CH-I_N"/>
</dbReference>
<dbReference type="InterPro" id="IPR001474">
    <property type="entry name" value="GTP_CycHdrlase_I"/>
</dbReference>
<dbReference type="InterPro" id="IPR018234">
    <property type="entry name" value="GTP_CycHdrlase_I_CS"/>
</dbReference>
<dbReference type="InterPro" id="IPR020602">
    <property type="entry name" value="GTP_CycHdrlase_I_dom"/>
</dbReference>
<dbReference type="NCBIfam" id="TIGR00063">
    <property type="entry name" value="folE"/>
    <property type="match status" value="1"/>
</dbReference>
<dbReference type="NCBIfam" id="NF006825">
    <property type="entry name" value="PRK09347.1-2"/>
    <property type="match status" value="1"/>
</dbReference>
<dbReference type="NCBIfam" id="NF006826">
    <property type="entry name" value="PRK09347.1-3"/>
    <property type="match status" value="1"/>
</dbReference>
<dbReference type="PANTHER" id="PTHR11109:SF7">
    <property type="entry name" value="GTP CYCLOHYDROLASE 1"/>
    <property type="match status" value="1"/>
</dbReference>
<dbReference type="PANTHER" id="PTHR11109">
    <property type="entry name" value="GTP CYCLOHYDROLASE I"/>
    <property type="match status" value="1"/>
</dbReference>
<dbReference type="Pfam" id="PF01227">
    <property type="entry name" value="GTP_cyclohydroI"/>
    <property type="match status" value="1"/>
</dbReference>
<dbReference type="SUPFAM" id="SSF55620">
    <property type="entry name" value="Tetrahydrobiopterin biosynthesis enzymes-like"/>
    <property type="match status" value="1"/>
</dbReference>
<dbReference type="PROSITE" id="PS00859">
    <property type="entry name" value="GTP_CYCLOHYDROL_1_1"/>
    <property type="match status" value="1"/>
</dbReference>
<sequence length="196" mass="22270">MAIDVKAIEEHIRGILIALGDNPEREGLKNTPKRVAKMYEEVFKGMCYSNDEIAEMFNVTFEDDLCINDNENDMVFMKEIEIFSHCEHHLALMYNMKVAIAYIPKKKIIGLSKIARIADMVGRRLQLQERIGSDIAEILQKITDSEDVAVIIEGEHGCMTTRGIKKPGTKTITTTLRGKFNTDPIVSNKLMMLYTK</sequence>
<accession>A7FU67</accession>
<organism>
    <name type="scientific">Clostridium botulinum (strain ATCC 19397 / Type A)</name>
    <dbReference type="NCBI Taxonomy" id="441770"/>
    <lineage>
        <taxon>Bacteria</taxon>
        <taxon>Bacillati</taxon>
        <taxon>Bacillota</taxon>
        <taxon>Clostridia</taxon>
        <taxon>Eubacteriales</taxon>
        <taxon>Clostridiaceae</taxon>
        <taxon>Clostridium</taxon>
    </lineage>
</organism>
<proteinExistence type="inferred from homology"/>
<protein>
    <recommendedName>
        <fullName evidence="2">GTP cyclohydrolase 1</fullName>
        <ecNumber evidence="2">3.5.4.16</ecNumber>
    </recommendedName>
    <alternativeName>
        <fullName evidence="2">GTP cyclohydrolase I</fullName>
        <shortName evidence="2">GTP-CH-I</shortName>
    </alternativeName>
</protein>
<comment type="catalytic activity">
    <reaction evidence="2">
        <text>GTP + H2O = 7,8-dihydroneopterin 3'-triphosphate + formate + H(+)</text>
        <dbReference type="Rhea" id="RHEA:17473"/>
        <dbReference type="ChEBI" id="CHEBI:15377"/>
        <dbReference type="ChEBI" id="CHEBI:15378"/>
        <dbReference type="ChEBI" id="CHEBI:15740"/>
        <dbReference type="ChEBI" id="CHEBI:37565"/>
        <dbReference type="ChEBI" id="CHEBI:58462"/>
        <dbReference type="EC" id="3.5.4.16"/>
    </reaction>
</comment>
<comment type="pathway">
    <text evidence="2">Cofactor biosynthesis; 7,8-dihydroneopterin triphosphate biosynthesis; 7,8-dihydroneopterin triphosphate from GTP: step 1/1.</text>
</comment>
<comment type="subunit">
    <text evidence="1">Toroid-shaped homodecamer, composed of two pentamers of five dimers.</text>
</comment>
<comment type="similarity">
    <text evidence="2">Belongs to the GTP cyclohydrolase I family.</text>
</comment>
<gene>
    <name evidence="2" type="primary">folE</name>
    <name type="ordered locus">CLB_1577</name>
</gene>
<evidence type="ECO:0000250" key="1"/>
<evidence type="ECO:0000255" key="2">
    <source>
        <dbReference type="HAMAP-Rule" id="MF_00223"/>
    </source>
</evidence>
<name>GCH1_CLOB1</name>
<reference key="1">
    <citation type="journal article" date="2007" name="PLoS ONE">
        <title>Analysis of the neurotoxin complex genes in Clostridium botulinum A1-A4 and B1 strains: BoNT/A3, /Ba4 and /B1 clusters are located within plasmids.</title>
        <authorList>
            <person name="Smith T.J."/>
            <person name="Hill K.K."/>
            <person name="Foley B.T."/>
            <person name="Detter J.C."/>
            <person name="Munk A.C."/>
            <person name="Bruce D.C."/>
            <person name="Doggett N.A."/>
            <person name="Smith L.A."/>
            <person name="Marks J.D."/>
            <person name="Xie G."/>
            <person name="Brettin T.S."/>
        </authorList>
    </citation>
    <scope>NUCLEOTIDE SEQUENCE [LARGE SCALE GENOMIC DNA]</scope>
    <source>
        <strain>ATCC 19397 / Type A</strain>
    </source>
</reference>
<keyword id="KW-0342">GTP-binding</keyword>
<keyword id="KW-0378">Hydrolase</keyword>
<keyword id="KW-0479">Metal-binding</keyword>
<keyword id="KW-0547">Nucleotide-binding</keyword>
<keyword id="KW-0554">One-carbon metabolism</keyword>
<keyword id="KW-0862">Zinc</keyword>
<feature type="chain" id="PRO_1000043678" description="GTP cyclohydrolase 1">
    <location>
        <begin position="1"/>
        <end position="196"/>
    </location>
</feature>
<feature type="binding site" evidence="2">
    <location>
        <position position="86"/>
    </location>
    <ligand>
        <name>Zn(2+)</name>
        <dbReference type="ChEBI" id="CHEBI:29105"/>
    </ligand>
</feature>
<feature type="binding site" evidence="2">
    <location>
        <position position="89"/>
    </location>
    <ligand>
        <name>Zn(2+)</name>
        <dbReference type="ChEBI" id="CHEBI:29105"/>
    </ligand>
</feature>
<feature type="binding site" evidence="2">
    <location>
        <position position="158"/>
    </location>
    <ligand>
        <name>Zn(2+)</name>
        <dbReference type="ChEBI" id="CHEBI:29105"/>
    </ligand>
</feature>